<accession>B6I9Z2</accession>
<name>RIBA_ECOSE</name>
<gene>
    <name evidence="1" type="primary">ribA</name>
    <name type="ordered locus">ECSE_1327</name>
</gene>
<sequence>MQLKRVAEAKLPTPWGDFLMVGFEELATGHDHVALVYGDISGHTPVLARVHSECLTGDALFSLRCDCGFQLEAALTQIAEEGRGILLYHRQEGRNIGLLNKIRAYALQDQGYDTVEANHQLGFAADERDFTLCADMFKLLGVNEVRLLTNNPKKVEILTEAGINIVERVPLIVGRNPNNEHYLDTKAEKMGHLLNK</sequence>
<protein>
    <recommendedName>
        <fullName evidence="1">GTP cyclohydrolase-2</fullName>
        <ecNumber evidence="1">3.5.4.25</ecNumber>
    </recommendedName>
    <alternativeName>
        <fullName evidence="1">GTP cyclohydrolase II</fullName>
    </alternativeName>
</protein>
<evidence type="ECO:0000255" key="1">
    <source>
        <dbReference type="HAMAP-Rule" id="MF_00179"/>
    </source>
</evidence>
<dbReference type="EC" id="3.5.4.25" evidence="1"/>
<dbReference type="EMBL" id="AP009240">
    <property type="protein sequence ID" value="BAG76851.1"/>
    <property type="molecule type" value="Genomic_DNA"/>
</dbReference>
<dbReference type="RefSeq" id="WP_001176295.1">
    <property type="nucleotide sequence ID" value="NC_011415.1"/>
</dbReference>
<dbReference type="SMR" id="B6I9Z2"/>
<dbReference type="GeneID" id="86946614"/>
<dbReference type="KEGG" id="ecy:ECSE_1327"/>
<dbReference type="HOGENOM" id="CLU_020273_2_1_6"/>
<dbReference type="UniPathway" id="UPA00275">
    <property type="reaction ID" value="UER00400"/>
</dbReference>
<dbReference type="Proteomes" id="UP000008199">
    <property type="component" value="Chromosome"/>
</dbReference>
<dbReference type="GO" id="GO:0005829">
    <property type="term" value="C:cytosol"/>
    <property type="evidence" value="ECO:0007669"/>
    <property type="project" value="TreeGrafter"/>
</dbReference>
<dbReference type="GO" id="GO:0005525">
    <property type="term" value="F:GTP binding"/>
    <property type="evidence" value="ECO:0007669"/>
    <property type="project" value="UniProtKB-KW"/>
</dbReference>
<dbReference type="GO" id="GO:0003935">
    <property type="term" value="F:GTP cyclohydrolase II activity"/>
    <property type="evidence" value="ECO:0007669"/>
    <property type="project" value="UniProtKB-UniRule"/>
</dbReference>
<dbReference type="GO" id="GO:0008270">
    <property type="term" value="F:zinc ion binding"/>
    <property type="evidence" value="ECO:0007669"/>
    <property type="project" value="UniProtKB-UniRule"/>
</dbReference>
<dbReference type="GO" id="GO:0009231">
    <property type="term" value="P:riboflavin biosynthetic process"/>
    <property type="evidence" value="ECO:0007669"/>
    <property type="project" value="UniProtKB-UniRule"/>
</dbReference>
<dbReference type="CDD" id="cd00641">
    <property type="entry name" value="GTP_cyclohydro2"/>
    <property type="match status" value="1"/>
</dbReference>
<dbReference type="FunFam" id="3.40.50.10990:FF:000002">
    <property type="entry name" value="GTP cyclohydrolase-2"/>
    <property type="match status" value="1"/>
</dbReference>
<dbReference type="Gene3D" id="3.40.50.10990">
    <property type="entry name" value="GTP cyclohydrolase II"/>
    <property type="match status" value="1"/>
</dbReference>
<dbReference type="HAMAP" id="MF_00179">
    <property type="entry name" value="RibA"/>
    <property type="match status" value="1"/>
</dbReference>
<dbReference type="InterPro" id="IPR032677">
    <property type="entry name" value="GTP_cyclohydro_II"/>
</dbReference>
<dbReference type="InterPro" id="IPR000926">
    <property type="entry name" value="RibA"/>
</dbReference>
<dbReference type="InterPro" id="IPR036144">
    <property type="entry name" value="RibA-like_sf"/>
</dbReference>
<dbReference type="NCBIfam" id="NF001591">
    <property type="entry name" value="PRK00393.1"/>
    <property type="match status" value="1"/>
</dbReference>
<dbReference type="NCBIfam" id="TIGR00505">
    <property type="entry name" value="ribA"/>
    <property type="match status" value="1"/>
</dbReference>
<dbReference type="PANTHER" id="PTHR21327:SF18">
    <property type="entry name" value="3,4-DIHYDROXY-2-BUTANONE 4-PHOSPHATE SYNTHASE"/>
    <property type="match status" value="1"/>
</dbReference>
<dbReference type="PANTHER" id="PTHR21327">
    <property type="entry name" value="GTP CYCLOHYDROLASE II-RELATED"/>
    <property type="match status" value="1"/>
</dbReference>
<dbReference type="Pfam" id="PF00925">
    <property type="entry name" value="GTP_cyclohydro2"/>
    <property type="match status" value="1"/>
</dbReference>
<dbReference type="SUPFAM" id="SSF142695">
    <property type="entry name" value="RibA-like"/>
    <property type="match status" value="1"/>
</dbReference>
<feature type="chain" id="PRO_1000098266" description="GTP cyclohydrolase-2">
    <location>
        <begin position="1"/>
        <end position="196"/>
    </location>
</feature>
<feature type="active site" description="Proton acceptor" evidence="1">
    <location>
        <position position="126"/>
    </location>
</feature>
<feature type="active site" description="Nucleophile" evidence="1">
    <location>
        <position position="128"/>
    </location>
</feature>
<feature type="binding site" evidence="1">
    <location>
        <begin position="49"/>
        <end position="53"/>
    </location>
    <ligand>
        <name>GTP</name>
        <dbReference type="ChEBI" id="CHEBI:37565"/>
    </ligand>
</feature>
<feature type="binding site" evidence="1">
    <location>
        <position position="54"/>
    </location>
    <ligand>
        <name>Zn(2+)</name>
        <dbReference type="ChEBI" id="CHEBI:29105"/>
        <note>catalytic</note>
    </ligand>
</feature>
<feature type="binding site" evidence="1">
    <location>
        <position position="65"/>
    </location>
    <ligand>
        <name>Zn(2+)</name>
        <dbReference type="ChEBI" id="CHEBI:29105"/>
        <note>catalytic</note>
    </ligand>
</feature>
<feature type="binding site" evidence="1">
    <location>
        <position position="67"/>
    </location>
    <ligand>
        <name>Zn(2+)</name>
        <dbReference type="ChEBI" id="CHEBI:29105"/>
        <note>catalytic</note>
    </ligand>
</feature>
<feature type="binding site" evidence="1">
    <location>
        <position position="70"/>
    </location>
    <ligand>
        <name>GTP</name>
        <dbReference type="ChEBI" id="CHEBI:37565"/>
    </ligand>
</feature>
<feature type="binding site" evidence="1">
    <location>
        <begin position="92"/>
        <end position="94"/>
    </location>
    <ligand>
        <name>GTP</name>
        <dbReference type="ChEBI" id="CHEBI:37565"/>
    </ligand>
</feature>
<feature type="binding site" evidence="1">
    <location>
        <position position="114"/>
    </location>
    <ligand>
        <name>GTP</name>
        <dbReference type="ChEBI" id="CHEBI:37565"/>
    </ligand>
</feature>
<feature type="binding site" evidence="1">
    <location>
        <position position="149"/>
    </location>
    <ligand>
        <name>GTP</name>
        <dbReference type="ChEBI" id="CHEBI:37565"/>
    </ligand>
</feature>
<feature type="binding site" evidence="1">
    <location>
        <position position="154"/>
    </location>
    <ligand>
        <name>GTP</name>
        <dbReference type="ChEBI" id="CHEBI:37565"/>
    </ligand>
</feature>
<organism>
    <name type="scientific">Escherichia coli (strain SE11)</name>
    <dbReference type="NCBI Taxonomy" id="409438"/>
    <lineage>
        <taxon>Bacteria</taxon>
        <taxon>Pseudomonadati</taxon>
        <taxon>Pseudomonadota</taxon>
        <taxon>Gammaproteobacteria</taxon>
        <taxon>Enterobacterales</taxon>
        <taxon>Enterobacteriaceae</taxon>
        <taxon>Escherichia</taxon>
    </lineage>
</organism>
<keyword id="KW-0342">GTP-binding</keyword>
<keyword id="KW-0378">Hydrolase</keyword>
<keyword id="KW-0479">Metal-binding</keyword>
<keyword id="KW-0547">Nucleotide-binding</keyword>
<keyword id="KW-0686">Riboflavin biosynthesis</keyword>
<keyword id="KW-0862">Zinc</keyword>
<proteinExistence type="inferred from homology"/>
<comment type="function">
    <text evidence="1">Catalyzes the conversion of GTP to 2,5-diamino-6-ribosylamino-4(3H)-pyrimidinone 5'-phosphate (DARP), formate and pyrophosphate.</text>
</comment>
<comment type="catalytic activity">
    <reaction evidence="1">
        <text>GTP + 4 H2O = 2,5-diamino-6-hydroxy-4-(5-phosphoribosylamino)-pyrimidine + formate + 2 phosphate + 3 H(+)</text>
        <dbReference type="Rhea" id="RHEA:23704"/>
        <dbReference type="ChEBI" id="CHEBI:15377"/>
        <dbReference type="ChEBI" id="CHEBI:15378"/>
        <dbReference type="ChEBI" id="CHEBI:15740"/>
        <dbReference type="ChEBI" id="CHEBI:37565"/>
        <dbReference type="ChEBI" id="CHEBI:43474"/>
        <dbReference type="ChEBI" id="CHEBI:58614"/>
        <dbReference type="EC" id="3.5.4.25"/>
    </reaction>
</comment>
<comment type="cofactor">
    <cofactor evidence="1">
        <name>Zn(2+)</name>
        <dbReference type="ChEBI" id="CHEBI:29105"/>
    </cofactor>
    <text evidence="1">Binds 1 zinc ion per subunit.</text>
</comment>
<comment type="pathway">
    <text evidence="1">Cofactor biosynthesis; riboflavin biosynthesis; 5-amino-6-(D-ribitylamino)uracil from GTP: step 1/4.</text>
</comment>
<comment type="subunit">
    <text evidence="1">Homodimer.</text>
</comment>
<comment type="similarity">
    <text evidence="1">Belongs to the GTP cyclohydrolase II family.</text>
</comment>
<reference key="1">
    <citation type="journal article" date="2008" name="DNA Res.">
        <title>Complete genome sequence and comparative analysis of the wild-type commensal Escherichia coli strain SE11 isolated from a healthy adult.</title>
        <authorList>
            <person name="Oshima K."/>
            <person name="Toh H."/>
            <person name="Ogura Y."/>
            <person name="Sasamoto H."/>
            <person name="Morita H."/>
            <person name="Park S.-H."/>
            <person name="Ooka T."/>
            <person name="Iyoda S."/>
            <person name="Taylor T.D."/>
            <person name="Hayashi T."/>
            <person name="Itoh K."/>
            <person name="Hattori M."/>
        </authorList>
    </citation>
    <scope>NUCLEOTIDE SEQUENCE [LARGE SCALE GENOMIC DNA]</scope>
    <source>
        <strain>SE11</strain>
    </source>
</reference>